<feature type="chain" id="PRO_0000099709" description="Uncharacterized 7.6 kDa protein">
    <location>
        <begin position="1"/>
        <end position="65"/>
    </location>
</feature>
<accession>P20557</accession>
<name>YVEE_VACCC</name>
<organism>
    <name type="scientific">Vaccinia virus (strain Copenhagen)</name>
    <name type="common">VACV</name>
    <dbReference type="NCBI Taxonomy" id="10249"/>
    <lineage>
        <taxon>Viruses</taxon>
        <taxon>Varidnaviria</taxon>
        <taxon>Bamfordvirae</taxon>
        <taxon>Nucleocytoviricota</taxon>
        <taxon>Pokkesviricetes</taxon>
        <taxon>Chitovirales</taxon>
        <taxon>Poxviridae</taxon>
        <taxon>Chordopoxvirinae</taxon>
        <taxon>Orthopoxvirus</taxon>
        <taxon>Vaccinia virus</taxon>
    </lineage>
</organism>
<reference key="1">
    <citation type="journal article" date="1990" name="Virology">
        <title>The complete DNA sequence of vaccinia virus.</title>
        <authorList>
            <person name="Goebel S.J."/>
            <person name="Johnson G.P."/>
            <person name="Perkus M.E."/>
            <person name="Davis S.W."/>
            <person name="Winslow J.P."/>
            <person name="Paoletti E."/>
        </authorList>
    </citation>
    <scope>NUCLEOTIDE SEQUENCE [LARGE SCALE GENOMIC DNA]</scope>
</reference>
<reference key="2">
    <citation type="journal article" date="1990" name="Virology">
        <title>Appendix to 'The complete DNA sequence of vaccinia virus'.</title>
        <authorList>
            <person name="Goebel S.J."/>
            <person name="Johnson G.P."/>
            <person name="Perkus M.E."/>
            <person name="Davis S.W."/>
            <person name="Winslow J.P."/>
            <person name="Paoletti E."/>
        </authorList>
    </citation>
    <scope>COMPLETE GENOME</scope>
</reference>
<dbReference type="EMBL" id="M35027">
    <property type="protein sequence ID" value="AAA48050.1"/>
    <property type="molecule type" value="Genomic_DNA"/>
</dbReference>
<dbReference type="PIR" id="B42510">
    <property type="entry name" value="B42510"/>
</dbReference>
<dbReference type="Proteomes" id="UP000008269">
    <property type="component" value="Segment"/>
</dbReference>
<sequence length="65" mass="7584">MITSIVNLCQILLVQRVTSVWRYPVRNIKPTNIEKFIHGGILYAAFLWLFYQPHICDGAFSIFNI</sequence>
<organismHost>
    <name type="scientific">Homo sapiens</name>
    <name type="common">Human</name>
    <dbReference type="NCBI Taxonomy" id="9606"/>
</organismHost>
<proteinExistence type="predicted"/>
<protein>
    <recommendedName>
        <fullName>Uncharacterized 7.6 kDa protein</fullName>
    </recommendedName>
</protein>
<gene>
    <name type="ORF">E ORF E</name>
</gene>
<keyword id="KW-1185">Reference proteome</keyword>